<sequence>MGMRMMFVVFLLVVLASTVVSSTSGRRAFHGRNAAAKASGLVSLTDRRPECCSDPRCNSSHPELCGGRR</sequence>
<organism>
    <name type="scientific">Conus textile</name>
    <name type="common">Cloth-of-gold cone</name>
    <dbReference type="NCBI Taxonomy" id="6494"/>
    <lineage>
        <taxon>Eukaryota</taxon>
        <taxon>Metazoa</taxon>
        <taxon>Spiralia</taxon>
        <taxon>Lophotrochozoa</taxon>
        <taxon>Mollusca</taxon>
        <taxon>Gastropoda</taxon>
        <taxon>Caenogastropoda</taxon>
        <taxon>Neogastropoda</taxon>
        <taxon>Conoidea</taxon>
        <taxon>Conidae</taxon>
        <taxon>Conus</taxon>
        <taxon>Cylinder</taxon>
    </lineage>
</organism>
<proteinExistence type="inferred from homology"/>
<name>CA11_CONTE</name>
<protein>
    <recommendedName>
        <fullName>Alpha-conotoxin-like Tx1</fullName>
    </recommendedName>
</protein>
<feature type="signal peptide" evidence="4">
    <location>
        <begin position="1"/>
        <end position="21"/>
    </location>
</feature>
<feature type="propeptide" id="PRO_0000034892" evidence="1">
    <location>
        <begin position="22"/>
        <end position="49"/>
    </location>
</feature>
<feature type="peptide" id="PRO_0000034893" description="Alpha-conotoxin-like Tx1">
    <location>
        <begin position="50"/>
        <end position="66"/>
    </location>
</feature>
<feature type="region of interest" description="Ser-Xaa-Pro motif, crucial for potent interaction with nAChR" evidence="2">
    <location>
        <begin position="53"/>
        <end position="55"/>
    </location>
</feature>
<feature type="modified residue" description="Glycine amide" evidence="3">
    <location>
        <position position="66"/>
    </location>
</feature>
<feature type="disulfide bond" evidence="2">
    <location>
        <begin position="51"/>
        <end position="57"/>
    </location>
</feature>
<feature type="disulfide bond" evidence="2">
    <location>
        <begin position="52"/>
        <end position="65"/>
    </location>
</feature>
<dbReference type="EMBL" id="AF146352">
    <property type="protein sequence ID" value="AAD31912.1"/>
    <property type="molecule type" value="mRNA"/>
</dbReference>
<dbReference type="IntAct" id="Q9XZK6">
    <property type="interactions" value="1"/>
</dbReference>
<dbReference type="MINT" id="Q9XZK6"/>
<dbReference type="ConoServer" id="52">
    <property type="toxin name" value="Tx1 precursor"/>
</dbReference>
<dbReference type="GO" id="GO:0005576">
    <property type="term" value="C:extracellular region"/>
    <property type="evidence" value="ECO:0007669"/>
    <property type="project" value="UniProtKB-SubCell"/>
</dbReference>
<dbReference type="GO" id="GO:0035792">
    <property type="term" value="C:host cell postsynaptic membrane"/>
    <property type="evidence" value="ECO:0007669"/>
    <property type="project" value="UniProtKB-KW"/>
</dbReference>
<dbReference type="GO" id="GO:0030550">
    <property type="term" value="F:acetylcholine receptor inhibitor activity"/>
    <property type="evidence" value="ECO:0007669"/>
    <property type="project" value="UniProtKB-KW"/>
</dbReference>
<dbReference type="GO" id="GO:0099106">
    <property type="term" value="F:ion channel regulator activity"/>
    <property type="evidence" value="ECO:0007669"/>
    <property type="project" value="UniProtKB-KW"/>
</dbReference>
<dbReference type="GO" id="GO:0090729">
    <property type="term" value="F:toxin activity"/>
    <property type="evidence" value="ECO:0007669"/>
    <property type="project" value="UniProtKB-KW"/>
</dbReference>
<dbReference type="InterPro" id="IPR009958">
    <property type="entry name" value="Conotoxin_a-typ"/>
</dbReference>
<dbReference type="InterPro" id="IPR018072">
    <property type="entry name" value="Conotoxin_a-typ_CS"/>
</dbReference>
<dbReference type="Pfam" id="PF07365">
    <property type="entry name" value="Toxin_8"/>
    <property type="match status" value="1"/>
</dbReference>
<dbReference type="PROSITE" id="PS60014">
    <property type="entry name" value="ALPHA_CONOTOXIN"/>
    <property type="match status" value="1"/>
</dbReference>
<keyword id="KW-0008">Acetylcholine receptor inhibiting toxin</keyword>
<keyword id="KW-0027">Amidation</keyword>
<keyword id="KW-1015">Disulfide bond</keyword>
<keyword id="KW-0872">Ion channel impairing toxin</keyword>
<keyword id="KW-0528">Neurotoxin</keyword>
<keyword id="KW-0629">Postsynaptic neurotoxin</keyword>
<keyword id="KW-0964">Secreted</keyword>
<keyword id="KW-0732">Signal</keyword>
<keyword id="KW-0800">Toxin</keyword>
<comment type="function">
    <text evidence="1">Alpha-conotoxins act on postsynaptic membranes, they bind to the nicotinic acetylcholine receptors (nAChR) and thus inhibit them.</text>
</comment>
<comment type="subcellular location">
    <subcellularLocation>
        <location evidence="6">Secreted</location>
    </subcellularLocation>
</comment>
<comment type="tissue specificity">
    <text evidence="6">Expressed by the venom duct.</text>
</comment>
<comment type="domain">
    <text evidence="5">The cysteine framework is I (CC-C-C). Alpha4/7 pattern.</text>
</comment>
<comment type="similarity">
    <text evidence="5">Belongs to the conotoxin A superfamily.</text>
</comment>
<evidence type="ECO:0000250" key="1"/>
<evidence type="ECO:0000250" key="2">
    <source>
        <dbReference type="UniProtKB" id="P56636"/>
    </source>
</evidence>
<evidence type="ECO:0000250" key="3">
    <source>
        <dbReference type="UniProtKB" id="P85886"/>
    </source>
</evidence>
<evidence type="ECO:0000255" key="4"/>
<evidence type="ECO:0000305" key="5"/>
<evidence type="ECO:0000305" key="6">
    <source>
    </source>
</evidence>
<reference key="1">
    <citation type="journal article" date="1999" name="Peptides">
        <title>Conopeptides from Conus striatus and Conus textile by cDNA cloning.</title>
        <authorList>
            <person name="Lu B.-S."/>
            <person name="Yu F."/>
            <person name="Zhao D."/>
            <person name="Huang P.-T."/>
            <person name="Huang C.-F."/>
        </authorList>
    </citation>
    <scope>NUCLEOTIDE SEQUENCE [MRNA]</scope>
    <source>
        <tissue>Venom duct</tissue>
    </source>
</reference>
<accession>Q9XZK6</accession>